<sequence length="114" mass="12271">MSYPEANVLVTTAETIPGYTIVEVLGIVVGITVRSRGLGGNLMAALRSLVGGEIKEFVEMAEQARMQALIRMIDRAKELGANAVVNIRFDSNELNQSMDEIIAYGTAVKVAKNS</sequence>
<comment type="similarity">
    <text evidence="1">Belongs to the UPF0145 family.</text>
</comment>
<organism>
    <name type="scientific">Saccharolobus islandicus (strain Y.G.57.14 / Yellowstone #1)</name>
    <name type="common">Sulfolobus islandicus</name>
    <dbReference type="NCBI Taxonomy" id="439386"/>
    <lineage>
        <taxon>Archaea</taxon>
        <taxon>Thermoproteota</taxon>
        <taxon>Thermoprotei</taxon>
        <taxon>Sulfolobales</taxon>
        <taxon>Sulfolobaceae</taxon>
        <taxon>Saccharolobus</taxon>
    </lineage>
</organism>
<name>Y873_SACI7</name>
<dbReference type="EMBL" id="CP001403">
    <property type="protein sequence ID" value="ACP45151.1"/>
    <property type="molecule type" value="Genomic_DNA"/>
</dbReference>
<dbReference type="RefSeq" id="WP_012715933.1">
    <property type="nucleotide sequence ID" value="NC_012622.1"/>
</dbReference>
<dbReference type="SMR" id="C3NCS3"/>
<dbReference type="GeneID" id="7805760"/>
<dbReference type="KEGG" id="siy:YG5714_0873"/>
<dbReference type="HOGENOM" id="CLU_117144_1_1_2"/>
<dbReference type="Proteomes" id="UP000002308">
    <property type="component" value="Chromosome"/>
</dbReference>
<dbReference type="Gene3D" id="3.30.110.70">
    <property type="entry name" value="Hypothetical protein apc22750. Chain B"/>
    <property type="match status" value="1"/>
</dbReference>
<dbReference type="HAMAP" id="MF_00338">
    <property type="entry name" value="UPF0145"/>
    <property type="match status" value="1"/>
</dbReference>
<dbReference type="InterPro" id="IPR035439">
    <property type="entry name" value="UPF0145_dom_sf"/>
</dbReference>
<dbReference type="InterPro" id="IPR002765">
    <property type="entry name" value="UPF0145_YbjQ-like"/>
</dbReference>
<dbReference type="PANTHER" id="PTHR34068:SF2">
    <property type="entry name" value="UPF0145 PROTEIN SCO3412"/>
    <property type="match status" value="1"/>
</dbReference>
<dbReference type="PANTHER" id="PTHR34068">
    <property type="entry name" value="UPF0145 PROTEIN YBJQ"/>
    <property type="match status" value="1"/>
</dbReference>
<dbReference type="Pfam" id="PF01906">
    <property type="entry name" value="YbjQ_1"/>
    <property type="match status" value="1"/>
</dbReference>
<dbReference type="SUPFAM" id="SSF117782">
    <property type="entry name" value="YbjQ-like"/>
    <property type="match status" value="1"/>
</dbReference>
<protein>
    <recommendedName>
        <fullName evidence="1">UPF0145 protein YG5714_0873</fullName>
    </recommendedName>
</protein>
<proteinExistence type="inferred from homology"/>
<evidence type="ECO:0000255" key="1">
    <source>
        <dbReference type="HAMAP-Rule" id="MF_00338"/>
    </source>
</evidence>
<reference key="1">
    <citation type="journal article" date="2009" name="Proc. Natl. Acad. Sci. U.S.A.">
        <title>Biogeography of the Sulfolobus islandicus pan-genome.</title>
        <authorList>
            <person name="Reno M.L."/>
            <person name="Held N.L."/>
            <person name="Fields C.J."/>
            <person name="Burke P.V."/>
            <person name="Whitaker R.J."/>
        </authorList>
    </citation>
    <scope>NUCLEOTIDE SEQUENCE [LARGE SCALE GENOMIC DNA]</scope>
    <source>
        <strain>Y.G.57.14 / Yellowstone #1</strain>
    </source>
</reference>
<feature type="chain" id="PRO_1000205243" description="UPF0145 protein YG5714_0873">
    <location>
        <begin position="1"/>
        <end position="114"/>
    </location>
</feature>
<gene>
    <name type="ordered locus">YG5714_0873</name>
</gene>
<accession>C3NCS3</accession>